<name>PHKR_MYCTO</name>
<dbReference type="EC" id="1.2.-.-"/>
<dbReference type="EMBL" id="AE000516">
    <property type="protein sequence ID" value="AAK47351.1"/>
    <property type="molecule type" value="Genomic_DNA"/>
</dbReference>
<dbReference type="PIR" id="D70669">
    <property type="entry name" value="D70669"/>
</dbReference>
<dbReference type="RefSeq" id="WP_003917712.1">
    <property type="nucleotide sequence ID" value="NZ_KK341227.1"/>
</dbReference>
<dbReference type="SMR" id="P9WIB6"/>
<dbReference type="KEGG" id="mtc:MT3025"/>
<dbReference type="PATRIC" id="fig|83331.31.peg.3266"/>
<dbReference type="HOGENOM" id="CLU_027853_5_3_11"/>
<dbReference type="Proteomes" id="UP000001020">
    <property type="component" value="Chromosome"/>
</dbReference>
<dbReference type="GO" id="GO:0016705">
    <property type="term" value="F:oxidoreductase activity, acting on paired donors, with incorporation or reduction of molecular oxygen"/>
    <property type="evidence" value="ECO:0007669"/>
    <property type="project" value="InterPro"/>
</dbReference>
<dbReference type="GO" id="GO:0006629">
    <property type="term" value="P:lipid metabolic process"/>
    <property type="evidence" value="ECO:0007669"/>
    <property type="project" value="UniProtKB-KW"/>
</dbReference>
<dbReference type="CDD" id="cd01097">
    <property type="entry name" value="Tetrahydromethanopterin_reductase"/>
    <property type="match status" value="1"/>
</dbReference>
<dbReference type="FunFam" id="3.20.20.30:FF:000015">
    <property type="entry name" value="Phthiodiolone/phenolphthiodiolone dimycocerosates ketoreductase"/>
    <property type="match status" value="1"/>
</dbReference>
<dbReference type="Gene3D" id="3.20.20.30">
    <property type="entry name" value="Luciferase-like domain"/>
    <property type="match status" value="1"/>
</dbReference>
<dbReference type="InterPro" id="IPR050564">
    <property type="entry name" value="F420-G6PD/mer"/>
</dbReference>
<dbReference type="InterPro" id="IPR011251">
    <property type="entry name" value="Luciferase-like_dom"/>
</dbReference>
<dbReference type="InterPro" id="IPR036661">
    <property type="entry name" value="Luciferase-like_sf"/>
</dbReference>
<dbReference type="PANTHER" id="PTHR43244">
    <property type="match status" value="1"/>
</dbReference>
<dbReference type="PANTHER" id="PTHR43244:SF1">
    <property type="entry name" value="5,10-METHYLENETETRAHYDROMETHANOPTERIN REDUCTASE"/>
    <property type="match status" value="1"/>
</dbReference>
<dbReference type="Pfam" id="PF00296">
    <property type="entry name" value="Bac_luciferase"/>
    <property type="match status" value="1"/>
</dbReference>
<dbReference type="SUPFAM" id="SSF51679">
    <property type="entry name" value="Bacterial luciferase-like"/>
    <property type="match status" value="1"/>
</dbReference>
<comment type="function">
    <text evidence="1">Catalyzes the reduction of the keto moiety of phthiodiolone dimycocerosates (DIM B) and glycosylated phenolphthiodiolone dimycocerosates to form the intermediate compounds phthiotriol and glycosylated phenolphthiotriol dimycocerosates during phthiocerol dimycocerosates (DIM A) and glycosylated phenolphthiocerol dimycocerosates (PGL) biosynthesis.</text>
</comment>
<comment type="similarity">
    <text evidence="2">Belongs to the mer family. Phthiodiolone/phenolphthiodiolone dimycocerosates ketoreductase subfamily.</text>
</comment>
<sequence>MGGLRFGFVDALVHSRLPPTLPARSSMAAATVMGADSYWVGDHLNALVPRSIATSEYLGIAAKFVPKIDANYEPWTMLGNLAFGLPSRLRLGVCVTDAGRRNPAVTAQAAATLHLLTRGRAILGIGVGEREGNEPYGVEWTKPVARFEEALATIRALWNSNGELISRESPYFPLHNALFDLPPYRGKWPEIWVSAHGPRMLRATGRYADAWIPIVVVRPSDYSRALEAVRSAASDAGRDPMSITPAAVRGIITGRNRDDVEEALESVVVKMTALGVPGEAWARHGVEHPMGADFSGVQDIIPQTMDKQTVLSYAAKVPAALMKEVVFSGTPDEVIDQVAEWRDHGLRYVVLINGSLVNPSLRKTVTAVLPHAKVLRGLKKL</sequence>
<evidence type="ECO:0000250" key="1"/>
<evidence type="ECO:0000305" key="2"/>
<proteinExistence type="inferred from homology"/>
<reference key="1">
    <citation type="journal article" date="2002" name="J. Bacteriol.">
        <title>Whole-genome comparison of Mycobacterium tuberculosis clinical and laboratory strains.</title>
        <authorList>
            <person name="Fleischmann R.D."/>
            <person name="Alland D."/>
            <person name="Eisen J.A."/>
            <person name="Carpenter L."/>
            <person name="White O."/>
            <person name="Peterson J.D."/>
            <person name="DeBoy R.T."/>
            <person name="Dodson R.J."/>
            <person name="Gwinn M.L."/>
            <person name="Haft D.H."/>
            <person name="Hickey E.K."/>
            <person name="Kolonay J.F."/>
            <person name="Nelson W.C."/>
            <person name="Umayam L.A."/>
            <person name="Ermolaeva M.D."/>
            <person name="Salzberg S.L."/>
            <person name="Delcher A."/>
            <person name="Utterback T.R."/>
            <person name="Weidman J.F."/>
            <person name="Khouri H.M."/>
            <person name="Gill J."/>
            <person name="Mikula A."/>
            <person name="Bishai W."/>
            <person name="Jacobs W.R. Jr."/>
            <person name="Venter J.C."/>
            <person name="Fraser C.M."/>
        </authorList>
    </citation>
    <scope>NUCLEOTIDE SEQUENCE [LARGE SCALE GENOMIC DNA]</scope>
    <source>
        <strain>CDC 1551 / Oshkosh</strain>
    </source>
</reference>
<protein>
    <recommendedName>
        <fullName>Phthiodiolone/phenolphthiodiolone dimycocerosates ketoreductase</fullName>
        <ecNumber>1.2.-.-</ecNumber>
    </recommendedName>
</protein>
<accession>P9WIB6</accession>
<accession>L0TB46</accession>
<accession>P95140</accession>
<accession>Q50465</accession>
<accession>Q7D6D6</accession>
<gene>
    <name type="ordered locus">MT3025</name>
</gene>
<feature type="chain" id="PRO_0000428035" description="Phthiodiolone/phenolphthiodiolone dimycocerosates ketoreductase">
    <location>
        <begin position="1"/>
        <end position="381"/>
    </location>
</feature>
<organism>
    <name type="scientific">Mycobacterium tuberculosis (strain CDC 1551 / Oshkosh)</name>
    <dbReference type="NCBI Taxonomy" id="83331"/>
    <lineage>
        <taxon>Bacteria</taxon>
        <taxon>Bacillati</taxon>
        <taxon>Actinomycetota</taxon>
        <taxon>Actinomycetes</taxon>
        <taxon>Mycobacteriales</taxon>
        <taxon>Mycobacteriaceae</taxon>
        <taxon>Mycobacterium</taxon>
        <taxon>Mycobacterium tuberculosis complex</taxon>
    </lineage>
</organism>
<keyword id="KW-0444">Lipid biosynthesis</keyword>
<keyword id="KW-0443">Lipid metabolism</keyword>
<keyword id="KW-0560">Oxidoreductase</keyword>
<keyword id="KW-1185">Reference proteome</keyword>